<gene>
    <name evidence="3" type="primary">gp226</name>
</gene>
<gene>
    <name evidence="5" type="ORF">Vi01_182</name>
</gene>
<feature type="chain" id="PRO_0000456278" description="O-seryl-dTMP PLP-dependent decarboxylase">
    <location>
        <begin position="1"/>
        <end position="424"/>
    </location>
</feature>
<proteinExistence type="evidence at protein level"/>
<evidence type="ECO:0000269" key="1">
    <source>
    </source>
</evidence>
<evidence type="ECO:0000269" key="2">
    <source>
    </source>
</evidence>
<evidence type="ECO:0000303" key="3">
    <source>
    </source>
</evidence>
<evidence type="ECO:0000305" key="4"/>
<evidence type="ECO:0000312" key="5">
    <source>
        <dbReference type="EMBL" id="CBW38050.1"/>
    </source>
</evidence>
<accession>E1XTJ1</accession>
<keyword id="KW-0210">Decarboxylase</keyword>
<keyword id="KW-0945">Host-virus interaction</keyword>
<keyword id="KW-1090">Inhibition of host innate immune response by virus</keyword>
<keyword id="KW-0456">Lyase</keyword>
<keyword id="KW-1185">Reference proteome</keyword>
<keyword id="KW-1258">Restriction-modification system evasion by virus</keyword>
<keyword id="KW-0899">Viral immunoevasion</keyword>
<organism>
    <name type="scientific">Salmonella phage ViI</name>
    <dbReference type="NCBI Taxonomy" id="1987993"/>
    <lineage>
        <taxon>Viruses</taxon>
        <taxon>Duplodnaviria</taxon>
        <taxon>Heunggongvirae</taxon>
        <taxon>Uroviricota</taxon>
        <taxon>Caudoviricetes</taxon>
        <taxon>Ackermannviridae</taxon>
        <taxon>Cvivirinae</taxon>
        <taxon>Kuttervirus</taxon>
    </lineage>
</organism>
<protein>
    <recommendedName>
        <fullName evidence="4">O-seryl-dTMP PLP-dependent decarboxylase</fullName>
    </recommendedName>
</protein>
<comment type="function">
    <text evidence="1 2">Converts 5-O-serinylthymidine (O-SerT) into 5-aminoethoxy-2'-deoxymethyluridine (5-NeOmdU) as a step in the pathway leading to thymidine hypermodifications in the viral genome (PubMed:34522950). As a final result of the pathway of hypermodification, 5-NeOmdU substitutes for about 40% of the thymidines in the viral DNA (PubMed:29555775, PubMed:34522950). These modifications probably prevent degradation of viral genome by the host restriction-modification antiviral defense system (PubMed:34522950).</text>
</comment>
<comment type="catalytic activity">
    <reaction evidence="2">
        <text>5-O-(L-seryl)-dTMP in DNA + H(+) = 5-aminoethoxy-methyl-dUMP in DNA + CO2</text>
        <dbReference type="Rhea" id="RHEA:71571"/>
        <dbReference type="Rhea" id="RHEA-COMP:18046"/>
        <dbReference type="Rhea" id="RHEA-COMP:18047"/>
        <dbReference type="ChEBI" id="CHEBI:15378"/>
        <dbReference type="ChEBI" id="CHEBI:16526"/>
        <dbReference type="ChEBI" id="CHEBI:190922"/>
        <dbReference type="ChEBI" id="CHEBI:190923"/>
    </reaction>
</comment>
<comment type="similarity">
    <text evidence="4">Belongs to the pyridoxal-phosphate-dependent aminodecarboxylase family.</text>
</comment>
<dbReference type="EMBL" id="FQ312032">
    <property type="protein sequence ID" value="CBW38050.1"/>
    <property type="molecule type" value="Genomic_DNA"/>
</dbReference>
<dbReference type="Proteomes" id="UP000000339">
    <property type="component" value="Segment"/>
</dbReference>
<dbReference type="GO" id="GO:0016831">
    <property type="term" value="F:carboxy-lyase activity"/>
    <property type="evidence" value="ECO:0007669"/>
    <property type="project" value="UniProtKB-KW"/>
</dbReference>
<dbReference type="GO" id="GO:0099018">
    <property type="term" value="P:symbiont-mediated evasion of host restriction-modification system"/>
    <property type="evidence" value="ECO:0007669"/>
    <property type="project" value="UniProtKB-KW"/>
</dbReference>
<dbReference type="GO" id="GO:0052170">
    <property type="term" value="P:symbiont-mediated suppression of host innate immune response"/>
    <property type="evidence" value="ECO:0007669"/>
    <property type="project" value="UniProtKB-KW"/>
</dbReference>
<dbReference type="Gene3D" id="3.40.50.1100">
    <property type="match status" value="2"/>
</dbReference>
<dbReference type="InterPro" id="IPR036052">
    <property type="entry name" value="TrpB-like_PALP_sf"/>
</dbReference>
<dbReference type="SUPFAM" id="SSF53686">
    <property type="entry name" value="Tryptophan synthase beta subunit-like PLP-dependent enzymes"/>
    <property type="match status" value="1"/>
</dbReference>
<name>PLP_BPSAV</name>
<organismHost>
    <name type="scientific">Salmonella typhi</name>
    <dbReference type="NCBI Taxonomy" id="90370"/>
</organismHost>
<reference key="1">
    <citation type="journal article" date="2010" name="J. Bacteriol.">
        <title>A conserved acetyl esterase domain targets diverse bacteriophages to the Vi capsular receptor of Salmonella enterica serovar Typhi.</title>
        <authorList>
            <person name="Pickard D."/>
            <person name="Toribio A.L."/>
            <person name="Petty N.K."/>
            <person name="van Tonder A."/>
            <person name="Yu L."/>
            <person name="Goulding D."/>
            <person name="Barrell B."/>
            <person name="Rance R."/>
            <person name="Harris D."/>
            <person name="Wetter M."/>
            <person name="Wain J."/>
            <person name="Choudhary J."/>
            <person name="Thomson N."/>
            <person name="Dougan G."/>
        </authorList>
    </citation>
    <scope>NUCLEOTIDE SEQUENCE [LARGE SCALE GENOMIC DNA]</scope>
</reference>
<reference key="2">
    <citation type="journal article" date="2018" name="Proc. Natl. Acad. Sci. U.S.A.">
        <title>Identification and biosynthesis of thymidine hypermodifications in the genomic DNA of widespread bacterial viruses.</title>
        <authorList>
            <person name="Lee Y.J."/>
            <person name="Dai N."/>
            <person name="Walsh S.E."/>
            <person name="Mueller S."/>
            <person name="Fraser M.E."/>
            <person name="Kauffman K.M."/>
            <person name="Guan C."/>
            <person name="Correa I.R. Jr."/>
            <person name="Weigele P.R."/>
        </authorList>
    </citation>
    <scope>FUNCTION</scope>
</reference>
<reference key="3">
    <citation type="journal article" date="2021" name="Nucleic Acids Res.">
        <title>Pathways of thymidine hypermodification.</title>
        <authorList>
            <person name="Lee Y.J."/>
            <person name="Dai N."/>
            <person name="Mueller S.I."/>
            <person name="Guan C."/>
            <person name="Parker M.J."/>
            <person name="Fraser M.E."/>
            <person name="Walsh S.E."/>
            <person name="Sridar J."/>
            <person name="Mulholland A."/>
            <person name="Nayak K."/>
            <person name="Sun Z."/>
            <person name="Lin Y.C."/>
            <person name="Comb D.G."/>
            <person name="Marks K."/>
            <person name="Gonzalez R."/>
            <person name="Dowling D.P."/>
            <person name="Bandarian V."/>
            <person name="Saleh L."/>
            <person name="Correa I.R."/>
            <person name="Weigele P.R."/>
        </authorList>
    </citation>
    <scope>FUNCTION</scope>
    <scope>CATALYTIC ACTIVITY</scope>
</reference>
<sequence>MNEPIDPKSFPSQPLSPYIPMHHIGKGPYKTIFNVLSLNRDHIHWEDYLYKHTPCELVANPETNQQVWFKREDYFAPLSCYMNGKQGINGSKLRQAIWLMVEHLKAGGSPDLIHGTVVGSPQSPMATAVSRHFGGKTTTVLGATKPTTCMNHDMVKMSAWFGSEFNFVGSGYNSTIQPRCKKLIEQQNPKAYYLEYGITLDHTLHSPERIAGFHMLGGEQVANIPDHITDLIIPAGSCNSCTSILTGLAMHPKPNLKNVYLIGIGPNRLDFIESRLRIIGKQANLPHITDFTRCYHDNPDYVYGKKDLQHASKSVSLAGLLMGIREKGESEITLPRFAVHHWDLHTTNWVRYNDLMDYQWGDIELHPRYEGKVMTWIQQHKPELLNENTLFWIVGSKPYIEPMKAACPELSMPEQVPVNEFTPD</sequence>